<organism>
    <name type="scientific">Homo sapiens</name>
    <name type="common">Human</name>
    <dbReference type="NCBI Taxonomy" id="9606"/>
    <lineage>
        <taxon>Eukaryota</taxon>
        <taxon>Metazoa</taxon>
        <taxon>Chordata</taxon>
        <taxon>Craniata</taxon>
        <taxon>Vertebrata</taxon>
        <taxon>Euteleostomi</taxon>
        <taxon>Mammalia</taxon>
        <taxon>Eutheria</taxon>
        <taxon>Euarchontoglires</taxon>
        <taxon>Primates</taxon>
        <taxon>Haplorrhini</taxon>
        <taxon>Catarrhini</taxon>
        <taxon>Hominidae</taxon>
        <taxon>Homo</taxon>
    </lineage>
</organism>
<name>LAYN_HUMAN</name>
<gene>
    <name type="primary">LAYN</name>
    <name type="ORF">UNQ208/PRO234</name>
</gene>
<dbReference type="EMBL" id="AY358554">
    <property type="protein sequence ID" value="AAQ88918.1"/>
    <property type="molecule type" value="mRNA"/>
</dbReference>
<dbReference type="EMBL" id="AK055539">
    <property type="protein sequence ID" value="BAB70946.1"/>
    <property type="molecule type" value="mRNA"/>
</dbReference>
<dbReference type="EMBL" id="AK055654">
    <property type="protein sequence ID" value="BAB70978.1"/>
    <property type="molecule type" value="mRNA"/>
</dbReference>
<dbReference type="EMBL" id="AK296231">
    <property type="protein sequence ID" value="BAG58952.1"/>
    <property type="molecule type" value="mRNA"/>
</dbReference>
<dbReference type="EMBL" id="AP002008">
    <property type="status" value="NOT_ANNOTATED_CDS"/>
    <property type="molecule type" value="Genomic_DNA"/>
</dbReference>
<dbReference type="EMBL" id="CH471065">
    <property type="protein sequence ID" value="EAW67145.1"/>
    <property type="molecule type" value="Genomic_DNA"/>
</dbReference>
<dbReference type="EMBL" id="BC025407">
    <property type="protein sequence ID" value="AAH25407.1"/>
    <property type="molecule type" value="mRNA"/>
</dbReference>
<dbReference type="CCDS" id="CCDS31676.1">
    <molecule id="Q6UX15-2"/>
</dbReference>
<dbReference type="CCDS" id="CCDS58178.1">
    <molecule id="Q6UX15-1"/>
</dbReference>
<dbReference type="CCDS" id="CCDS58179.1">
    <molecule id="Q6UX15-3"/>
</dbReference>
<dbReference type="RefSeq" id="NP_001245319.1">
    <molecule id="Q6UX15-1"/>
    <property type="nucleotide sequence ID" value="NM_001258390.2"/>
</dbReference>
<dbReference type="RefSeq" id="NP_001245320.1">
    <molecule id="Q6UX15-3"/>
    <property type="nucleotide sequence ID" value="NM_001258391.2"/>
</dbReference>
<dbReference type="RefSeq" id="NP_001305728.1">
    <property type="nucleotide sequence ID" value="NM_001318799.1"/>
</dbReference>
<dbReference type="RefSeq" id="NP_849156.1">
    <molecule id="Q6UX15-2"/>
    <property type="nucleotide sequence ID" value="NM_178834.5"/>
</dbReference>
<dbReference type="RefSeq" id="XP_006718833.1">
    <property type="nucleotide sequence ID" value="XM_006718770.3"/>
</dbReference>
<dbReference type="SMR" id="Q6UX15"/>
<dbReference type="BioGRID" id="126823">
    <property type="interactions" value="8"/>
</dbReference>
<dbReference type="FunCoup" id="Q6UX15">
    <property type="interactions" value="37"/>
</dbReference>
<dbReference type="IntAct" id="Q6UX15">
    <property type="interactions" value="7"/>
</dbReference>
<dbReference type="MINT" id="Q6UX15"/>
<dbReference type="STRING" id="9606.ENSP00000364765"/>
<dbReference type="DrugBank" id="DB08818">
    <property type="generic name" value="Hyaluronic acid"/>
</dbReference>
<dbReference type="GlyCosmos" id="Q6UX15">
    <property type="glycosylation" value="2 sites, 1 glycan"/>
</dbReference>
<dbReference type="GlyGen" id="Q6UX15">
    <property type="glycosylation" value="4 sites, 2 O-linked glycans (3 sites)"/>
</dbReference>
<dbReference type="iPTMnet" id="Q6UX15"/>
<dbReference type="PhosphoSitePlus" id="Q6UX15"/>
<dbReference type="SwissPalm" id="Q6UX15"/>
<dbReference type="BioMuta" id="LAYN"/>
<dbReference type="jPOST" id="Q6UX15"/>
<dbReference type="MassIVE" id="Q6UX15"/>
<dbReference type="PaxDb" id="9606-ENSP00000364765"/>
<dbReference type="PeptideAtlas" id="Q6UX15"/>
<dbReference type="ProteomicsDB" id="4403"/>
<dbReference type="ProteomicsDB" id="67550">
    <molecule id="Q6UX15-1"/>
</dbReference>
<dbReference type="ProteomicsDB" id="67551">
    <molecule id="Q6UX15-2"/>
</dbReference>
<dbReference type="Pumba" id="Q6UX15"/>
<dbReference type="Antibodypedia" id="32045">
    <property type="antibodies" value="363 antibodies from 27 providers"/>
</dbReference>
<dbReference type="DNASU" id="143903"/>
<dbReference type="Ensembl" id="ENST00000375614.7">
    <molecule id="Q6UX15-2"/>
    <property type="protein sequence ID" value="ENSP00000364764.2"/>
    <property type="gene ID" value="ENSG00000204381.12"/>
</dbReference>
<dbReference type="Ensembl" id="ENST00000375615.7">
    <molecule id="Q6UX15-1"/>
    <property type="protein sequence ID" value="ENSP00000364765.3"/>
    <property type="gene ID" value="ENSG00000204381.12"/>
</dbReference>
<dbReference type="Ensembl" id="ENST00000436913.6">
    <molecule id="Q6UX15-3"/>
    <property type="protein sequence ID" value="ENSP00000392942.2"/>
    <property type="gene ID" value="ENSG00000204381.12"/>
</dbReference>
<dbReference type="GeneID" id="143903"/>
<dbReference type="KEGG" id="hsa:143903"/>
<dbReference type="MANE-Select" id="ENST00000375614.7">
    <molecule id="Q6UX15-2"/>
    <property type="protein sequence ID" value="ENSP00000364764.2"/>
    <property type="RefSeq nucleotide sequence ID" value="NM_178834.5"/>
    <property type="RefSeq protein sequence ID" value="NP_849156.1"/>
</dbReference>
<dbReference type="UCSC" id="uc001plp.3">
    <molecule id="Q6UX15-1"/>
    <property type="organism name" value="human"/>
</dbReference>
<dbReference type="AGR" id="HGNC:29471"/>
<dbReference type="CTD" id="143903"/>
<dbReference type="DisGeNET" id="143903"/>
<dbReference type="GeneCards" id="LAYN"/>
<dbReference type="HGNC" id="HGNC:29471">
    <property type="gene designation" value="LAYN"/>
</dbReference>
<dbReference type="HPA" id="ENSG00000204381">
    <property type="expression patterns" value="Low tissue specificity"/>
</dbReference>
<dbReference type="MIM" id="618843">
    <property type="type" value="gene"/>
</dbReference>
<dbReference type="neXtProt" id="NX_Q6UX15"/>
<dbReference type="OpenTargets" id="ENSG00000204381"/>
<dbReference type="PharmGKB" id="PA142671570"/>
<dbReference type="VEuPathDB" id="HostDB:ENSG00000204381"/>
<dbReference type="eggNOG" id="KOG4297">
    <property type="taxonomic scope" value="Eukaryota"/>
</dbReference>
<dbReference type="GeneTree" id="ENSGT00390000001844"/>
<dbReference type="HOGENOM" id="CLU_045492_1_1_1"/>
<dbReference type="InParanoid" id="Q6UX15"/>
<dbReference type="OMA" id="WVWIYRK"/>
<dbReference type="OrthoDB" id="5797898at2759"/>
<dbReference type="PAN-GO" id="Q6UX15">
    <property type="GO annotations" value="1 GO annotation based on evolutionary models"/>
</dbReference>
<dbReference type="PhylomeDB" id="Q6UX15"/>
<dbReference type="TreeFam" id="TF330715"/>
<dbReference type="PathwayCommons" id="Q6UX15"/>
<dbReference type="SignaLink" id="Q6UX15"/>
<dbReference type="BioGRID-ORCS" id="143903">
    <property type="hits" value="11 hits in 1146 CRISPR screens"/>
</dbReference>
<dbReference type="ChiTaRS" id="LAYN">
    <property type="organism name" value="human"/>
</dbReference>
<dbReference type="GenomeRNAi" id="143903"/>
<dbReference type="Pharos" id="Q6UX15">
    <property type="development level" value="Tbio"/>
</dbReference>
<dbReference type="PRO" id="PR:Q6UX15"/>
<dbReference type="Proteomes" id="UP000005640">
    <property type="component" value="Chromosome 11"/>
</dbReference>
<dbReference type="RNAct" id="Q6UX15">
    <property type="molecule type" value="protein"/>
</dbReference>
<dbReference type="Bgee" id="ENSG00000204381">
    <property type="expression patterns" value="Expressed in decidua and 158 other cell types or tissues"/>
</dbReference>
<dbReference type="ExpressionAtlas" id="Q6UX15">
    <property type="expression patterns" value="baseline and differential"/>
</dbReference>
<dbReference type="GO" id="GO:0009986">
    <property type="term" value="C:cell surface"/>
    <property type="evidence" value="ECO:0000250"/>
    <property type="project" value="HGNC-UCL"/>
</dbReference>
<dbReference type="GO" id="GO:0005925">
    <property type="term" value="C:focal adhesion"/>
    <property type="evidence" value="ECO:0007005"/>
    <property type="project" value="UniProtKB"/>
</dbReference>
<dbReference type="GO" id="GO:0016020">
    <property type="term" value="C:membrane"/>
    <property type="evidence" value="ECO:0007669"/>
    <property type="project" value="UniProtKB-SubCell"/>
</dbReference>
<dbReference type="GO" id="GO:0001726">
    <property type="term" value="C:ruffle"/>
    <property type="evidence" value="ECO:0000250"/>
    <property type="project" value="HGNC-UCL"/>
</dbReference>
<dbReference type="GO" id="GO:0030246">
    <property type="term" value="F:carbohydrate binding"/>
    <property type="evidence" value="ECO:0007669"/>
    <property type="project" value="UniProtKB-KW"/>
</dbReference>
<dbReference type="GO" id="GO:0005540">
    <property type="term" value="F:hyaluronic acid binding"/>
    <property type="evidence" value="ECO:0000314"/>
    <property type="project" value="HGNC-UCL"/>
</dbReference>
<dbReference type="CDD" id="cd03595">
    <property type="entry name" value="CLECT_chondrolectin_like"/>
    <property type="match status" value="1"/>
</dbReference>
<dbReference type="FunFam" id="3.10.100.10:FF:000006">
    <property type="entry name" value="Layilin b"/>
    <property type="match status" value="1"/>
</dbReference>
<dbReference type="Gene3D" id="3.10.100.10">
    <property type="entry name" value="Mannose-Binding Protein A, subunit A"/>
    <property type="match status" value="1"/>
</dbReference>
<dbReference type="InterPro" id="IPR001304">
    <property type="entry name" value="C-type_lectin-like"/>
</dbReference>
<dbReference type="InterPro" id="IPR016186">
    <property type="entry name" value="C-type_lectin-like/link_sf"/>
</dbReference>
<dbReference type="InterPro" id="IPR051505">
    <property type="entry name" value="C-type_lectin_domain"/>
</dbReference>
<dbReference type="InterPro" id="IPR016187">
    <property type="entry name" value="CTDL_fold"/>
</dbReference>
<dbReference type="PANTHER" id="PTHR14789:SF1">
    <property type="entry name" value="CHONDROLECTIN"/>
    <property type="match status" value="1"/>
</dbReference>
<dbReference type="PANTHER" id="PTHR14789">
    <property type="entry name" value="CHONDROLECTIN VARIANT CHODLFDELTAE"/>
    <property type="match status" value="1"/>
</dbReference>
<dbReference type="Pfam" id="PF00059">
    <property type="entry name" value="Lectin_C"/>
    <property type="match status" value="1"/>
</dbReference>
<dbReference type="SMART" id="SM00034">
    <property type="entry name" value="CLECT"/>
    <property type="match status" value="1"/>
</dbReference>
<dbReference type="SUPFAM" id="SSF56436">
    <property type="entry name" value="C-type lectin-like"/>
    <property type="match status" value="1"/>
</dbReference>
<dbReference type="PROSITE" id="PS50041">
    <property type="entry name" value="C_TYPE_LECTIN_2"/>
    <property type="match status" value="1"/>
</dbReference>
<keyword id="KW-0025">Alternative splicing</keyword>
<keyword id="KW-1015">Disulfide bond</keyword>
<keyword id="KW-0325">Glycoprotein</keyword>
<keyword id="KW-0430">Lectin</keyword>
<keyword id="KW-0472">Membrane</keyword>
<keyword id="KW-0597">Phosphoprotein</keyword>
<keyword id="KW-1267">Proteomics identification</keyword>
<keyword id="KW-1185">Reference proteome</keyword>
<keyword id="KW-0677">Repeat</keyword>
<keyword id="KW-0732">Signal</keyword>
<keyword id="KW-0812">Transmembrane</keyword>
<keyword id="KW-1133">Transmembrane helix</keyword>
<accession>Q6UX15</accession>
<accession>A6NJB0</accession>
<accession>B4DJU0</accession>
<accession>Q8TAY8</accession>
<accession>Q96NC5</accession>
<accession>Q96NF3</accession>
<sequence length="382" mass="43108">MRPGTALQAVLLAVLLVGLRAATGRLLSASDLDLRGGQPVCRGGTQRPCYKVIYFHDTSRRLNFEEAKEACRRDGGQLVSIESEDEQKLIEKFIENLLPSDGDFWIGLRRREEKQSNSTACQDLYAWTDGSISQFRNWYVDEPSCGSEVCVVMYHQPSAPAGIGGPYMFQWNDDRCNMKNNFICKYSDEKPAVPSREAEGEETELTTPVLPEETQEEDAKKTFKESREAALNLAYILIPSIPLLLLLVVTTVVCWVWICRKRKREQPDPSTKKQHTIWPSPHQGNSPDLEVYNVIRKQSEADLAETRPDLKNISFRVCSGEATPDDMSCDYDNMAVNPSESGFVTLVSVESGFVTNDIYEFSPDQMGRSKESGWVENEIYGY</sequence>
<protein>
    <recommendedName>
        <fullName>Layilin</fullName>
    </recommendedName>
</protein>
<feature type="signal peptide" evidence="3">
    <location>
        <begin position="1"/>
        <end position="21"/>
    </location>
</feature>
<feature type="chain" id="PRO_0000262508" description="Layilin">
    <location>
        <begin position="22"/>
        <end position="382"/>
    </location>
</feature>
<feature type="topological domain" description="Extracellular" evidence="3">
    <location>
        <begin position="22"/>
        <end position="235"/>
    </location>
</feature>
<feature type="transmembrane region" description="Helical" evidence="3">
    <location>
        <begin position="236"/>
        <end position="256"/>
    </location>
</feature>
<feature type="topological domain" description="Cytoplasmic" evidence="3">
    <location>
        <begin position="257"/>
        <end position="382"/>
    </location>
</feature>
<feature type="domain" description="C-type lectin" evidence="4">
    <location>
        <begin position="45"/>
        <end position="185"/>
    </location>
</feature>
<feature type="repeat" description="1-1">
    <location>
        <begin position="340"/>
        <end position="344"/>
    </location>
</feature>
<feature type="repeat" description="1-2">
    <location>
        <begin position="350"/>
        <end position="354"/>
    </location>
</feature>
<feature type="repeat" description="2-1">
    <location>
        <begin position="356"/>
        <end position="359"/>
    </location>
</feature>
<feature type="repeat" description="1-3">
    <location>
        <begin position="371"/>
        <end position="375"/>
    </location>
</feature>
<feature type="repeat" description="2-2">
    <location>
        <begin position="377"/>
        <end position="380"/>
    </location>
</feature>
<feature type="region of interest" description="Disordered" evidence="5">
    <location>
        <begin position="266"/>
        <end position="285"/>
    </location>
</feature>
<feature type="region of interest" description="Interaction with NF2" evidence="1">
    <location>
        <begin position="330"/>
        <end position="374"/>
    </location>
</feature>
<feature type="region of interest" description="Interaction with TLN1" evidence="1">
    <location>
        <begin position="337"/>
        <end position="382"/>
    </location>
</feature>
<feature type="region of interest" description="3 X 5 AA repeats of E-S-G-X-V">
    <location>
        <begin position="340"/>
        <end position="375"/>
    </location>
</feature>
<feature type="region of interest" description="2 X 4 AA repeats of N-X-I-Y">
    <location>
        <begin position="356"/>
        <end position="380"/>
    </location>
</feature>
<feature type="modified residue" description="Phosphoserine" evidence="2">
    <location>
        <position position="286"/>
    </location>
</feature>
<feature type="modified residue" description="Phosphoserine" evidence="2">
    <location>
        <position position="299"/>
    </location>
</feature>
<feature type="glycosylation site" description="N-linked (GlcNAc...) asparagine" evidence="3">
    <location>
        <position position="117"/>
    </location>
</feature>
<feature type="disulfide bond" evidence="4">
    <location>
        <begin position="71"/>
        <end position="184"/>
    </location>
</feature>
<feature type="disulfide bond" evidence="4">
    <location>
        <begin position="150"/>
        <end position="176"/>
    </location>
</feature>
<feature type="splice variant" id="VSP_054660" description="In isoform 3." evidence="7">
    <original>MRPGTALQAVLLAVLLVGLRAATGRLLSASDLDLR</original>
    <variation>MVTSGLGSGGVRRNKAIAQPARTFMLGLMAAYHNL</variation>
    <location>
        <begin position="1"/>
        <end position="35"/>
    </location>
</feature>
<feature type="splice variant" id="VSP_021781" description="In isoform 2." evidence="7 8">
    <location>
        <begin position="29"/>
        <end position="36"/>
    </location>
</feature>
<feature type="splice variant" id="VSP_054661" description="In isoform 3." evidence="7">
    <location>
        <begin position="36"/>
        <end position="188"/>
    </location>
</feature>
<feature type="sequence variant" id="VAR_029496" description="In dbSNP:rs11827718.">
    <original>E</original>
    <variation>K</variation>
    <location>
        <position position="66"/>
    </location>
</feature>
<feature type="sequence conflict" description="In Ref. 2; BAB70978." evidence="9" ref="2">
    <original>A</original>
    <variation>T</variation>
    <location>
        <position position="219"/>
    </location>
</feature>
<feature type="sequence conflict" description="In Ref. 5; AAH25407." evidence="9" ref="5">
    <original>V</original>
    <variation>M</variation>
    <location>
        <position position="344"/>
    </location>
</feature>
<reference key="1">
    <citation type="journal article" date="2003" name="Genome Res.">
        <title>The secreted protein discovery initiative (SPDI), a large-scale effort to identify novel human secreted and transmembrane proteins: a bioinformatics assessment.</title>
        <authorList>
            <person name="Clark H.F."/>
            <person name="Gurney A.L."/>
            <person name="Abaya E."/>
            <person name="Baker K."/>
            <person name="Baldwin D.T."/>
            <person name="Brush J."/>
            <person name="Chen J."/>
            <person name="Chow B."/>
            <person name="Chui C."/>
            <person name="Crowley C."/>
            <person name="Currell B."/>
            <person name="Deuel B."/>
            <person name="Dowd P."/>
            <person name="Eaton D."/>
            <person name="Foster J.S."/>
            <person name="Grimaldi C."/>
            <person name="Gu Q."/>
            <person name="Hass P.E."/>
            <person name="Heldens S."/>
            <person name="Huang A."/>
            <person name="Kim H.S."/>
            <person name="Klimowski L."/>
            <person name="Jin Y."/>
            <person name="Johnson S."/>
            <person name="Lee J."/>
            <person name="Lewis L."/>
            <person name="Liao D."/>
            <person name="Mark M.R."/>
            <person name="Robbie E."/>
            <person name="Sanchez C."/>
            <person name="Schoenfeld J."/>
            <person name="Seshagiri S."/>
            <person name="Simmons L."/>
            <person name="Singh J."/>
            <person name="Smith V."/>
            <person name="Stinson J."/>
            <person name="Vagts A."/>
            <person name="Vandlen R.L."/>
            <person name="Watanabe C."/>
            <person name="Wieand D."/>
            <person name="Woods K."/>
            <person name="Xie M.-H."/>
            <person name="Yansura D.G."/>
            <person name="Yi S."/>
            <person name="Yu G."/>
            <person name="Yuan J."/>
            <person name="Zhang M."/>
            <person name="Zhang Z."/>
            <person name="Goddard A.D."/>
            <person name="Wood W.I."/>
            <person name="Godowski P.J."/>
            <person name="Gray A.M."/>
        </authorList>
    </citation>
    <scope>NUCLEOTIDE SEQUENCE [LARGE SCALE MRNA] (ISOFORM 1)</scope>
</reference>
<reference key="2">
    <citation type="journal article" date="2004" name="Nat. Genet.">
        <title>Complete sequencing and characterization of 21,243 full-length human cDNAs.</title>
        <authorList>
            <person name="Ota T."/>
            <person name="Suzuki Y."/>
            <person name="Nishikawa T."/>
            <person name="Otsuki T."/>
            <person name="Sugiyama T."/>
            <person name="Irie R."/>
            <person name="Wakamatsu A."/>
            <person name="Hayashi K."/>
            <person name="Sato H."/>
            <person name="Nagai K."/>
            <person name="Kimura K."/>
            <person name="Makita H."/>
            <person name="Sekine M."/>
            <person name="Obayashi M."/>
            <person name="Nishi T."/>
            <person name="Shibahara T."/>
            <person name="Tanaka T."/>
            <person name="Ishii S."/>
            <person name="Yamamoto J."/>
            <person name="Saito K."/>
            <person name="Kawai Y."/>
            <person name="Isono Y."/>
            <person name="Nakamura Y."/>
            <person name="Nagahari K."/>
            <person name="Murakami K."/>
            <person name="Yasuda T."/>
            <person name="Iwayanagi T."/>
            <person name="Wagatsuma M."/>
            <person name="Shiratori A."/>
            <person name="Sudo H."/>
            <person name="Hosoiri T."/>
            <person name="Kaku Y."/>
            <person name="Kodaira H."/>
            <person name="Kondo H."/>
            <person name="Sugawara M."/>
            <person name="Takahashi M."/>
            <person name="Kanda K."/>
            <person name="Yokoi T."/>
            <person name="Furuya T."/>
            <person name="Kikkawa E."/>
            <person name="Omura Y."/>
            <person name="Abe K."/>
            <person name="Kamihara K."/>
            <person name="Katsuta N."/>
            <person name="Sato K."/>
            <person name="Tanikawa M."/>
            <person name="Yamazaki M."/>
            <person name="Ninomiya K."/>
            <person name="Ishibashi T."/>
            <person name="Yamashita H."/>
            <person name="Murakawa K."/>
            <person name="Fujimori K."/>
            <person name="Tanai H."/>
            <person name="Kimata M."/>
            <person name="Watanabe M."/>
            <person name="Hiraoka S."/>
            <person name="Chiba Y."/>
            <person name="Ishida S."/>
            <person name="Ono Y."/>
            <person name="Takiguchi S."/>
            <person name="Watanabe S."/>
            <person name="Yosida M."/>
            <person name="Hotuta T."/>
            <person name="Kusano J."/>
            <person name="Kanehori K."/>
            <person name="Takahashi-Fujii A."/>
            <person name="Hara H."/>
            <person name="Tanase T.-O."/>
            <person name="Nomura Y."/>
            <person name="Togiya S."/>
            <person name="Komai F."/>
            <person name="Hara R."/>
            <person name="Takeuchi K."/>
            <person name="Arita M."/>
            <person name="Imose N."/>
            <person name="Musashino K."/>
            <person name="Yuuki H."/>
            <person name="Oshima A."/>
            <person name="Sasaki N."/>
            <person name="Aotsuka S."/>
            <person name="Yoshikawa Y."/>
            <person name="Matsunawa H."/>
            <person name="Ichihara T."/>
            <person name="Shiohata N."/>
            <person name="Sano S."/>
            <person name="Moriya S."/>
            <person name="Momiyama H."/>
            <person name="Satoh N."/>
            <person name="Takami S."/>
            <person name="Terashima Y."/>
            <person name="Suzuki O."/>
            <person name="Nakagawa S."/>
            <person name="Senoh A."/>
            <person name="Mizoguchi H."/>
            <person name="Goto Y."/>
            <person name="Shimizu F."/>
            <person name="Wakebe H."/>
            <person name="Hishigaki H."/>
            <person name="Watanabe T."/>
            <person name="Sugiyama A."/>
            <person name="Takemoto M."/>
            <person name="Kawakami B."/>
            <person name="Yamazaki M."/>
            <person name="Watanabe K."/>
            <person name="Kumagai A."/>
            <person name="Itakura S."/>
            <person name="Fukuzumi Y."/>
            <person name="Fujimori Y."/>
            <person name="Komiyama M."/>
            <person name="Tashiro H."/>
            <person name="Tanigami A."/>
            <person name="Fujiwara T."/>
            <person name="Ono T."/>
            <person name="Yamada K."/>
            <person name="Fujii Y."/>
            <person name="Ozaki K."/>
            <person name="Hirao M."/>
            <person name="Ohmori Y."/>
            <person name="Kawabata A."/>
            <person name="Hikiji T."/>
            <person name="Kobatake N."/>
            <person name="Inagaki H."/>
            <person name="Ikema Y."/>
            <person name="Okamoto S."/>
            <person name="Okitani R."/>
            <person name="Kawakami T."/>
            <person name="Noguchi S."/>
            <person name="Itoh T."/>
            <person name="Shigeta K."/>
            <person name="Senba T."/>
            <person name="Matsumura K."/>
            <person name="Nakajima Y."/>
            <person name="Mizuno T."/>
            <person name="Morinaga M."/>
            <person name="Sasaki M."/>
            <person name="Togashi T."/>
            <person name="Oyama M."/>
            <person name="Hata H."/>
            <person name="Watanabe M."/>
            <person name="Komatsu T."/>
            <person name="Mizushima-Sugano J."/>
            <person name="Satoh T."/>
            <person name="Shirai Y."/>
            <person name="Takahashi Y."/>
            <person name="Nakagawa K."/>
            <person name="Okumura K."/>
            <person name="Nagase T."/>
            <person name="Nomura N."/>
            <person name="Kikuchi H."/>
            <person name="Masuho Y."/>
            <person name="Yamashita R."/>
            <person name="Nakai K."/>
            <person name="Yada T."/>
            <person name="Nakamura Y."/>
            <person name="Ohara O."/>
            <person name="Isogai T."/>
            <person name="Sugano S."/>
        </authorList>
    </citation>
    <scope>NUCLEOTIDE SEQUENCE [LARGE SCALE MRNA] (ISOFORMS 2 AND 3)</scope>
    <source>
        <tissue>Thalamus</tissue>
    </source>
</reference>
<reference key="3">
    <citation type="journal article" date="2006" name="Nature">
        <title>Human chromosome 11 DNA sequence and analysis including novel gene identification.</title>
        <authorList>
            <person name="Taylor T.D."/>
            <person name="Noguchi H."/>
            <person name="Totoki Y."/>
            <person name="Toyoda A."/>
            <person name="Kuroki Y."/>
            <person name="Dewar K."/>
            <person name="Lloyd C."/>
            <person name="Itoh T."/>
            <person name="Takeda T."/>
            <person name="Kim D.-W."/>
            <person name="She X."/>
            <person name="Barlow K.F."/>
            <person name="Bloom T."/>
            <person name="Bruford E."/>
            <person name="Chang J.L."/>
            <person name="Cuomo C.A."/>
            <person name="Eichler E."/>
            <person name="FitzGerald M.G."/>
            <person name="Jaffe D.B."/>
            <person name="LaButti K."/>
            <person name="Nicol R."/>
            <person name="Park H.-S."/>
            <person name="Seaman C."/>
            <person name="Sougnez C."/>
            <person name="Yang X."/>
            <person name="Zimmer A.R."/>
            <person name="Zody M.C."/>
            <person name="Birren B.W."/>
            <person name="Nusbaum C."/>
            <person name="Fujiyama A."/>
            <person name="Hattori M."/>
            <person name="Rogers J."/>
            <person name="Lander E.S."/>
            <person name="Sakaki Y."/>
        </authorList>
    </citation>
    <scope>NUCLEOTIDE SEQUENCE [LARGE SCALE GENOMIC DNA]</scope>
</reference>
<reference key="4">
    <citation type="submission" date="2005-07" db="EMBL/GenBank/DDBJ databases">
        <authorList>
            <person name="Mural R.J."/>
            <person name="Istrail S."/>
            <person name="Sutton G.G."/>
            <person name="Florea L."/>
            <person name="Halpern A.L."/>
            <person name="Mobarry C.M."/>
            <person name="Lippert R."/>
            <person name="Walenz B."/>
            <person name="Shatkay H."/>
            <person name="Dew I."/>
            <person name="Miller J.R."/>
            <person name="Flanigan M.J."/>
            <person name="Edwards N.J."/>
            <person name="Bolanos R."/>
            <person name="Fasulo D."/>
            <person name="Halldorsson B.V."/>
            <person name="Hannenhalli S."/>
            <person name="Turner R."/>
            <person name="Yooseph S."/>
            <person name="Lu F."/>
            <person name="Nusskern D.R."/>
            <person name="Shue B.C."/>
            <person name="Zheng X.H."/>
            <person name="Zhong F."/>
            <person name="Delcher A.L."/>
            <person name="Huson D.H."/>
            <person name="Kravitz S.A."/>
            <person name="Mouchard L."/>
            <person name="Reinert K."/>
            <person name="Remington K.A."/>
            <person name="Clark A.G."/>
            <person name="Waterman M.S."/>
            <person name="Eichler E.E."/>
            <person name="Adams M.D."/>
            <person name="Hunkapiller M.W."/>
            <person name="Myers E.W."/>
            <person name="Venter J.C."/>
        </authorList>
    </citation>
    <scope>NUCLEOTIDE SEQUENCE [LARGE SCALE GENOMIC DNA]</scope>
</reference>
<reference key="5">
    <citation type="journal article" date="2004" name="Genome Res.">
        <title>The status, quality, and expansion of the NIH full-length cDNA project: the Mammalian Gene Collection (MGC).</title>
        <authorList>
            <consortium name="The MGC Project Team"/>
        </authorList>
    </citation>
    <scope>NUCLEOTIDE SEQUENCE [LARGE SCALE MRNA] (ISOFORM 2)</scope>
    <source>
        <tissue>Brain</tissue>
    </source>
</reference>
<reference key="6">
    <citation type="journal article" date="2001" name="Mol. Biol. Cell">
        <title>Layilin, a novel integral membrane protein, is a hyaluronan receptor.</title>
        <authorList>
            <person name="Bono P."/>
            <person name="Rubin K."/>
            <person name="Higgins J.M.G."/>
            <person name="Hynes R.O."/>
        </authorList>
    </citation>
    <scope>FUNCTION</scope>
</reference>
<evidence type="ECO:0000250" key="1"/>
<evidence type="ECO:0000250" key="2">
    <source>
        <dbReference type="UniProtKB" id="Q8C351"/>
    </source>
</evidence>
<evidence type="ECO:0000255" key="3"/>
<evidence type="ECO:0000255" key="4">
    <source>
        <dbReference type="PROSITE-ProRule" id="PRU00040"/>
    </source>
</evidence>
<evidence type="ECO:0000256" key="5">
    <source>
        <dbReference type="SAM" id="MobiDB-lite"/>
    </source>
</evidence>
<evidence type="ECO:0000269" key="6">
    <source>
    </source>
</evidence>
<evidence type="ECO:0000303" key="7">
    <source>
    </source>
</evidence>
<evidence type="ECO:0000303" key="8">
    <source>
    </source>
</evidence>
<evidence type="ECO:0000305" key="9"/>
<comment type="function">
    <text evidence="6">Receptor for hyaluronate.</text>
</comment>
<comment type="subunit">
    <text evidence="1">Interacts with NF2, RDX and TLN1.</text>
</comment>
<comment type="interaction">
    <interactant intactId="EBI-19944128">
        <id>Q6UX15-2</id>
    </interactant>
    <interactant intactId="EBI-10244198">
        <id>Q5J5C9</id>
        <label>DEFB121</label>
    </interactant>
    <organismsDiffer>false</organismsDiffer>
    <experiments>3</experiments>
</comment>
<comment type="interaction">
    <interactant intactId="EBI-19944128">
        <id>Q6UX15-2</id>
    </interactant>
    <interactant intactId="EBI-6166686">
        <id>Q96F15</id>
        <label>GIMAP5</label>
    </interactant>
    <organismsDiffer>false</organismsDiffer>
    <experiments>3</experiments>
</comment>
<comment type="interaction">
    <interactant intactId="EBI-19944128">
        <id>Q6UX15-2</id>
    </interactant>
    <interactant intactId="EBI-720480">
        <id>P24593</id>
        <label>IGFBP5</label>
    </interactant>
    <organismsDiffer>false</organismsDiffer>
    <experiments>3</experiments>
</comment>
<comment type="interaction">
    <interactant intactId="EBI-19944128">
        <id>Q6UX15-2</id>
    </interactant>
    <interactant intactId="EBI-17633886">
        <id>O43934</id>
        <label>MFSD11</label>
    </interactant>
    <organismsDiffer>false</organismsDiffer>
    <experiments>3</experiments>
</comment>
<comment type="interaction">
    <interactant intactId="EBI-19944128">
        <id>Q6UX15-2</id>
    </interactant>
    <interactant intactId="EBI-11721828">
        <id>Q8IY26</id>
        <label>PLPP6</label>
    </interactant>
    <organismsDiffer>false</organismsDiffer>
    <experiments>3</experiments>
</comment>
<comment type="subcellular location">
    <subcellularLocation>
        <location evidence="9">Membrane</location>
        <topology evidence="9">Single-pass type I membrane protein</topology>
    </subcellularLocation>
    <text evidence="1">Colocalizes with TLN1 at the membrane ruffles.</text>
</comment>
<comment type="alternative products">
    <event type="alternative splicing"/>
    <isoform>
        <id>Q6UX15-1</id>
        <name>1</name>
        <sequence type="displayed"/>
    </isoform>
    <isoform>
        <id>Q6UX15-2</id>
        <name>2</name>
        <sequence type="described" ref="VSP_021781"/>
    </isoform>
    <isoform>
        <id>Q6UX15-3</id>
        <name>3</name>
        <sequence type="described" ref="VSP_054660 VSP_054661"/>
    </isoform>
</comment>
<comment type="domain">
    <text evidence="1">The C-terminal domain interacts with the N-terminal domain of RDX.</text>
</comment>
<proteinExistence type="evidence at protein level"/>